<proteinExistence type="inferred from homology"/>
<name>FAPR_SHOC1</name>
<accession>Q5WFM1</accession>
<evidence type="ECO:0000255" key="1">
    <source>
        <dbReference type="HAMAP-Rule" id="MF_01814"/>
    </source>
</evidence>
<feature type="chain" id="PRO_0000172816" description="Transcription factor FapR">
    <location>
        <begin position="1"/>
        <end position="191"/>
    </location>
</feature>
<feature type="domain" description="MaoC-like">
    <location>
        <begin position="102"/>
        <end position="169"/>
    </location>
</feature>
<organism>
    <name type="scientific">Shouchella clausii (strain KSM-K16)</name>
    <name type="common">Alkalihalobacillus clausii</name>
    <dbReference type="NCBI Taxonomy" id="66692"/>
    <lineage>
        <taxon>Bacteria</taxon>
        <taxon>Bacillati</taxon>
        <taxon>Bacillota</taxon>
        <taxon>Bacilli</taxon>
        <taxon>Bacillales</taxon>
        <taxon>Bacillaceae</taxon>
        <taxon>Shouchella</taxon>
    </lineage>
</organism>
<dbReference type="EMBL" id="AP006627">
    <property type="protein sequence ID" value="BAD64839.1"/>
    <property type="molecule type" value="Genomic_DNA"/>
</dbReference>
<dbReference type="RefSeq" id="WP_011247147.1">
    <property type="nucleotide sequence ID" value="NC_006582.1"/>
</dbReference>
<dbReference type="SMR" id="Q5WFM1"/>
<dbReference type="STRING" id="66692.ABC2304"/>
<dbReference type="KEGG" id="bcl:ABC2304"/>
<dbReference type="eggNOG" id="COG1349">
    <property type="taxonomic scope" value="Bacteria"/>
</dbReference>
<dbReference type="HOGENOM" id="CLU_095708_0_0_9"/>
<dbReference type="OrthoDB" id="1706183at2"/>
<dbReference type="Proteomes" id="UP000001168">
    <property type="component" value="Chromosome"/>
</dbReference>
<dbReference type="GO" id="GO:0003677">
    <property type="term" value="F:DNA binding"/>
    <property type="evidence" value="ECO:0007669"/>
    <property type="project" value="UniProtKB-KW"/>
</dbReference>
<dbReference type="GO" id="GO:0003700">
    <property type="term" value="F:DNA-binding transcription factor activity"/>
    <property type="evidence" value="ECO:0007669"/>
    <property type="project" value="UniProtKB-UniRule"/>
</dbReference>
<dbReference type="GO" id="GO:0006633">
    <property type="term" value="P:fatty acid biosynthetic process"/>
    <property type="evidence" value="ECO:0007669"/>
    <property type="project" value="UniProtKB-KW"/>
</dbReference>
<dbReference type="GO" id="GO:0045892">
    <property type="term" value="P:negative regulation of DNA-templated transcription"/>
    <property type="evidence" value="ECO:0007669"/>
    <property type="project" value="UniProtKB-UniRule"/>
</dbReference>
<dbReference type="GO" id="GO:0045717">
    <property type="term" value="P:negative regulation of fatty acid biosynthetic process"/>
    <property type="evidence" value="ECO:0007669"/>
    <property type="project" value="UniProtKB-UniRule"/>
</dbReference>
<dbReference type="CDD" id="cd03440">
    <property type="entry name" value="hot_dog"/>
    <property type="match status" value="1"/>
</dbReference>
<dbReference type="Gene3D" id="3.10.129.10">
    <property type="entry name" value="Hotdog Thioesterase"/>
    <property type="match status" value="1"/>
</dbReference>
<dbReference type="Gene3D" id="1.10.10.10">
    <property type="entry name" value="Winged helix-like DNA-binding domain superfamily/Winged helix DNA-binding domain"/>
    <property type="match status" value="1"/>
</dbReference>
<dbReference type="HAMAP" id="MF_01814">
    <property type="entry name" value="Transcrip_fact_FapR"/>
    <property type="match status" value="1"/>
</dbReference>
<dbReference type="InterPro" id="IPR029069">
    <property type="entry name" value="HotDog_dom_sf"/>
</dbReference>
<dbReference type="InterPro" id="IPR006683">
    <property type="entry name" value="Thioestr_dom"/>
</dbReference>
<dbReference type="InterPro" id="IPR017275">
    <property type="entry name" value="Transcription_factor_FapR"/>
</dbReference>
<dbReference type="InterPro" id="IPR036388">
    <property type="entry name" value="WH-like_DNA-bd_sf"/>
</dbReference>
<dbReference type="NCBIfam" id="NF003359">
    <property type="entry name" value="PRK04424.1"/>
    <property type="match status" value="1"/>
</dbReference>
<dbReference type="Pfam" id="PF03061">
    <property type="entry name" value="4HBT"/>
    <property type="match status" value="1"/>
</dbReference>
<dbReference type="PIRSF" id="PIRSF037733">
    <property type="entry name" value="Transcription_factor_FapR"/>
    <property type="match status" value="1"/>
</dbReference>
<dbReference type="SUPFAM" id="SSF54637">
    <property type="entry name" value="Thioesterase/thiol ester dehydrase-isomerase"/>
    <property type="match status" value="1"/>
</dbReference>
<keyword id="KW-0238">DNA-binding</keyword>
<keyword id="KW-0275">Fatty acid biosynthesis</keyword>
<keyword id="KW-0276">Fatty acid metabolism</keyword>
<keyword id="KW-0444">Lipid biosynthesis</keyword>
<keyword id="KW-0443">Lipid metabolism</keyword>
<keyword id="KW-1185">Reference proteome</keyword>
<keyword id="KW-0678">Repressor</keyword>
<keyword id="KW-0804">Transcription</keyword>
<keyword id="KW-0805">Transcription regulation</keyword>
<comment type="function">
    <text evidence="1">Transcriptional factor involved in regulation of membrane lipid biosynthesis by repressing genes involved in fatty acid and phospholipid metabolism.</text>
</comment>
<comment type="similarity">
    <text evidence="1">Belongs to the FapR family.</text>
</comment>
<gene>
    <name evidence="1" type="primary">fapR</name>
    <name type="ordered locus">ABC2304</name>
</gene>
<reference key="1">
    <citation type="submission" date="2003-10" db="EMBL/GenBank/DDBJ databases">
        <title>The complete genome sequence of the alkaliphilic Bacillus clausii KSM-K16.</title>
        <authorList>
            <person name="Takaki Y."/>
            <person name="Kageyama Y."/>
            <person name="Shimamura S."/>
            <person name="Suzuki H."/>
            <person name="Nishi S."/>
            <person name="Hatada Y."/>
            <person name="Kawai S."/>
            <person name="Ito S."/>
            <person name="Horikoshi K."/>
        </authorList>
    </citation>
    <scope>NUCLEOTIDE SEQUENCE [LARGE SCALE GENOMIC DNA]</scope>
    <source>
        <strain>KSM-K16</strain>
    </source>
</reference>
<sequence length="191" mass="21689">MKIKKKERQRLLMELLEGNPFMTDEELSAHFGVSIQTIRLDRMEQNIPELRERIKDVAYKQRDSVIALAPEEVFGEIVDLVLEERAISIFDVGPEHVFERSGIARGHHLFAQANSLAVALVNNEFVLTAKASIQFTRPVRVGERVVAKAEMAGKGSGRTRILVTSHVNQEVVFTGEFAMYQQNETEERPQQ</sequence>
<protein>
    <recommendedName>
        <fullName evidence="1">Transcription factor FapR</fullName>
    </recommendedName>
    <alternativeName>
        <fullName evidence="1">Fatty acid and phospholipid biosynthesis regulator</fullName>
    </alternativeName>
</protein>